<dbReference type="EC" id="6.3.4.4" evidence="1"/>
<dbReference type="EMBL" id="CP000517">
    <property type="protein sequence ID" value="ABX27828.1"/>
    <property type="molecule type" value="Genomic_DNA"/>
</dbReference>
<dbReference type="RefSeq" id="WP_012212368.1">
    <property type="nucleotide sequence ID" value="NC_010080.1"/>
</dbReference>
<dbReference type="SMR" id="A8YTK4"/>
<dbReference type="KEGG" id="lhe:lhv_2030"/>
<dbReference type="eggNOG" id="COG0104">
    <property type="taxonomic scope" value="Bacteria"/>
</dbReference>
<dbReference type="HOGENOM" id="CLU_029848_0_0_9"/>
<dbReference type="UniPathway" id="UPA00075">
    <property type="reaction ID" value="UER00335"/>
</dbReference>
<dbReference type="Proteomes" id="UP000000790">
    <property type="component" value="Chromosome"/>
</dbReference>
<dbReference type="GO" id="GO:0005737">
    <property type="term" value="C:cytoplasm"/>
    <property type="evidence" value="ECO:0007669"/>
    <property type="project" value="UniProtKB-SubCell"/>
</dbReference>
<dbReference type="GO" id="GO:0004019">
    <property type="term" value="F:adenylosuccinate synthase activity"/>
    <property type="evidence" value="ECO:0007669"/>
    <property type="project" value="UniProtKB-UniRule"/>
</dbReference>
<dbReference type="GO" id="GO:0005525">
    <property type="term" value="F:GTP binding"/>
    <property type="evidence" value="ECO:0007669"/>
    <property type="project" value="UniProtKB-UniRule"/>
</dbReference>
<dbReference type="GO" id="GO:0000287">
    <property type="term" value="F:magnesium ion binding"/>
    <property type="evidence" value="ECO:0007669"/>
    <property type="project" value="UniProtKB-UniRule"/>
</dbReference>
<dbReference type="GO" id="GO:0044208">
    <property type="term" value="P:'de novo' AMP biosynthetic process"/>
    <property type="evidence" value="ECO:0007669"/>
    <property type="project" value="UniProtKB-UniRule"/>
</dbReference>
<dbReference type="GO" id="GO:0046040">
    <property type="term" value="P:IMP metabolic process"/>
    <property type="evidence" value="ECO:0007669"/>
    <property type="project" value="TreeGrafter"/>
</dbReference>
<dbReference type="CDD" id="cd03108">
    <property type="entry name" value="AdSS"/>
    <property type="match status" value="1"/>
</dbReference>
<dbReference type="FunFam" id="1.10.300.10:FF:000001">
    <property type="entry name" value="Adenylosuccinate synthetase"/>
    <property type="match status" value="1"/>
</dbReference>
<dbReference type="FunFam" id="3.90.170.10:FF:000001">
    <property type="entry name" value="Adenylosuccinate synthetase"/>
    <property type="match status" value="1"/>
</dbReference>
<dbReference type="Gene3D" id="3.40.440.10">
    <property type="entry name" value="Adenylosuccinate Synthetase, subunit A, domain 1"/>
    <property type="match status" value="1"/>
</dbReference>
<dbReference type="Gene3D" id="1.10.300.10">
    <property type="entry name" value="Adenylosuccinate Synthetase, subunit A, domain 2"/>
    <property type="match status" value="1"/>
</dbReference>
<dbReference type="Gene3D" id="3.90.170.10">
    <property type="entry name" value="Adenylosuccinate Synthetase, subunit A, domain 3"/>
    <property type="match status" value="1"/>
</dbReference>
<dbReference type="HAMAP" id="MF_00011">
    <property type="entry name" value="Adenylosucc_synth"/>
    <property type="match status" value="1"/>
</dbReference>
<dbReference type="InterPro" id="IPR018220">
    <property type="entry name" value="Adenylosuccin_syn_GTP-bd"/>
</dbReference>
<dbReference type="InterPro" id="IPR033128">
    <property type="entry name" value="Adenylosuccin_syn_Lys_AS"/>
</dbReference>
<dbReference type="InterPro" id="IPR042109">
    <property type="entry name" value="Adenylosuccinate_synth_dom1"/>
</dbReference>
<dbReference type="InterPro" id="IPR042110">
    <property type="entry name" value="Adenylosuccinate_synth_dom2"/>
</dbReference>
<dbReference type="InterPro" id="IPR042111">
    <property type="entry name" value="Adenylosuccinate_synth_dom3"/>
</dbReference>
<dbReference type="InterPro" id="IPR001114">
    <property type="entry name" value="Adenylosuccinate_synthetase"/>
</dbReference>
<dbReference type="InterPro" id="IPR027417">
    <property type="entry name" value="P-loop_NTPase"/>
</dbReference>
<dbReference type="NCBIfam" id="NF002223">
    <property type="entry name" value="PRK01117.1"/>
    <property type="match status" value="1"/>
</dbReference>
<dbReference type="NCBIfam" id="TIGR00184">
    <property type="entry name" value="purA"/>
    <property type="match status" value="1"/>
</dbReference>
<dbReference type="PANTHER" id="PTHR11846">
    <property type="entry name" value="ADENYLOSUCCINATE SYNTHETASE"/>
    <property type="match status" value="1"/>
</dbReference>
<dbReference type="PANTHER" id="PTHR11846:SF0">
    <property type="entry name" value="ADENYLOSUCCINATE SYNTHETASE"/>
    <property type="match status" value="1"/>
</dbReference>
<dbReference type="Pfam" id="PF00709">
    <property type="entry name" value="Adenylsucc_synt"/>
    <property type="match status" value="1"/>
</dbReference>
<dbReference type="SMART" id="SM00788">
    <property type="entry name" value="Adenylsucc_synt"/>
    <property type="match status" value="1"/>
</dbReference>
<dbReference type="SUPFAM" id="SSF52540">
    <property type="entry name" value="P-loop containing nucleoside triphosphate hydrolases"/>
    <property type="match status" value="1"/>
</dbReference>
<dbReference type="PROSITE" id="PS01266">
    <property type="entry name" value="ADENYLOSUCCIN_SYN_1"/>
    <property type="match status" value="1"/>
</dbReference>
<dbReference type="PROSITE" id="PS00513">
    <property type="entry name" value="ADENYLOSUCCIN_SYN_2"/>
    <property type="match status" value="1"/>
</dbReference>
<reference key="1">
    <citation type="journal article" date="2008" name="J. Bacteriol.">
        <title>Genome sequence of Lactobacillus helveticus: an organism distinguished by selective gene loss and IS element expansion.</title>
        <authorList>
            <person name="Callanan M."/>
            <person name="Kaleta P."/>
            <person name="O'Callaghan J."/>
            <person name="O'Sullivan O."/>
            <person name="Jordan K."/>
            <person name="McAuliffe O."/>
            <person name="Sangrador-Vegas A."/>
            <person name="Slattery L."/>
            <person name="Fitzgerald G.F."/>
            <person name="Beresford T."/>
            <person name="Ross R.P."/>
        </authorList>
    </citation>
    <scope>NUCLEOTIDE SEQUENCE [LARGE SCALE GENOMIC DNA]</scope>
    <source>
        <strain>DPC 4571</strain>
    </source>
</reference>
<proteinExistence type="inferred from homology"/>
<accession>A8YTK4</accession>
<gene>
    <name evidence="1" type="primary">purA</name>
    <name type="ordered locus">lhv_2030</name>
</gene>
<feature type="chain" id="PRO_1000070941" description="Adenylosuccinate synthetase">
    <location>
        <begin position="1"/>
        <end position="429"/>
    </location>
</feature>
<feature type="active site" description="Proton acceptor" evidence="1">
    <location>
        <position position="13"/>
    </location>
</feature>
<feature type="active site" description="Proton donor" evidence="1">
    <location>
        <position position="41"/>
    </location>
</feature>
<feature type="binding site" evidence="1">
    <location>
        <begin position="12"/>
        <end position="18"/>
    </location>
    <ligand>
        <name>GTP</name>
        <dbReference type="ChEBI" id="CHEBI:37565"/>
    </ligand>
</feature>
<feature type="binding site" description="in other chain" evidence="1">
    <location>
        <begin position="13"/>
        <end position="16"/>
    </location>
    <ligand>
        <name>IMP</name>
        <dbReference type="ChEBI" id="CHEBI:58053"/>
        <note>ligand shared between dimeric partners</note>
    </ligand>
</feature>
<feature type="binding site" evidence="1">
    <location>
        <position position="13"/>
    </location>
    <ligand>
        <name>Mg(2+)</name>
        <dbReference type="ChEBI" id="CHEBI:18420"/>
    </ligand>
</feature>
<feature type="binding site" description="in other chain" evidence="1">
    <location>
        <begin position="38"/>
        <end position="41"/>
    </location>
    <ligand>
        <name>IMP</name>
        <dbReference type="ChEBI" id="CHEBI:58053"/>
        <note>ligand shared between dimeric partners</note>
    </ligand>
</feature>
<feature type="binding site" evidence="1">
    <location>
        <begin position="40"/>
        <end position="42"/>
    </location>
    <ligand>
        <name>GTP</name>
        <dbReference type="ChEBI" id="CHEBI:37565"/>
    </ligand>
</feature>
<feature type="binding site" evidence="1">
    <location>
        <position position="40"/>
    </location>
    <ligand>
        <name>Mg(2+)</name>
        <dbReference type="ChEBI" id="CHEBI:18420"/>
    </ligand>
</feature>
<feature type="binding site" description="in other chain" evidence="1">
    <location>
        <position position="128"/>
    </location>
    <ligand>
        <name>IMP</name>
        <dbReference type="ChEBI" id="CHEBI:58053"/>
        <note>ligand shared between dimeric partners</note>
    </ligand>
</feature>
<feature type="binding site" evidence="1">
    <location>
        <position position="142"/>
    </location>
    <ligand>
        <name>IMP</name>
        <dbReference type="ChEBI" id="CHEBI:58053"/>
        <note>ligand shared between dimeric partners</note>
    </ligand>
</feature>
<feature type="binding site" description="in other chain" evidence="1">
    <location>
        <position position="223"/>
    </location>
    <ligand>
        <name>IMP</name>
        <dbReference type="ChEBI" id="CHEBI:58053"/>
        <note>ligand shared between dimeric partners</note>
    </ligand>
</feature>
<feature type="binding site" description="in other chain" evidence="1">
    <location>
        <position position="238"/>
    </location>
    <ligand>
        <name>IMP</name>
        <dbReference type="ChEBI" id="CHEBI:58053"/>
        <note>ligand shared between dimeric partners</note>
    </ligand>
</feature>
<feature type="binding site" evidence="1">
    <location>
        <begin position="298"/>
        <end position="304"/>
    </location>
    <ligand>
        <name>substrate</name>
    </ligand>
</feature>
<feature type="binding site" description="in other chain" evidence="1">
    <location>
        <position position="302"/>
    </location>
    <ligand>
        <name>IMP</name>
        <dbReference type="ChEBI" id="CHEBI:58053"/>
        <note>ligand shared between dimeric partners</note>
    </ligand>
</feature>
<feature type="binding site" evidence="1">
    <location>
        <position position="304"/>
    </location>
    <ligand>
        <name>GTP</name>
        <dbReference type="ChEBI" id="CHEBI:37565"/>
    </ligand>
</feature>
<feature type="binding site" evidence="1">
    <location>
        <begin position="330"/>
        <end position="332"/>
    </location>
    <ligand>
        <name>GTP</name>
        <dbReference type="ChEBI" id="CHEBI:37565"/>
    </ligand>
</feature>
<feature type="binding site" evidence="1">
    <location>
        <begin position="412"/>
        <end position="414"/>
    </location>
    <ligand>
        <name>GTP</name>
        <dbReference type="ChEBI" id="CHEBI:37565"/>
    </ligand>
</feature>
<keyword id="KW-0963">Cytoplasm</keyword>
<keyword id="KW-0342">GTP-binding</keyword>
<keyword id="KW-0436">Ligase</keyword>
<keyword id="KW-0460">Magnesium</keyword>
<keyword id="KW-0479">Metal-binding</keyword>
<keyword id="KW-0547">Nucleotide-binding</keyword>
<keyword id="KW-0658">Purine biosynthesis</keyword>
<evidence type="ECO:0000255" key="1">
    <source>
        <dbReference type="HAMAP-Rule" id="MF_00011"/>
    </source>
</evidence>
<sequence>MAAVAVVGGQWGDEGKGKITDFLSKDATMAVRSNGGNNAGHTIDIDGKEFKMRLIPSGIFAASKAAVIGNGVVINPEVMFGELDNLEKNGIDTSKLRISNRAHIIMPYDVKQDEYQEEAKGDRKIGTTKNGIGPTYMDKASRIGIRVCDLLEKDTFEEKLRLNLKVKNELFTKVYGKPALKLEDIFDKYYEYGQKMKKYVTDTSVLVNDALDNGEKVLFEGAQGTMLDIDEGTYPYVTSSNTISGGICSGIGMGANRLNTVIGVCKAYTTRVGEGPFPTELLDEVGDRIRDTAHEYGTVTGRPRRVGWFDSVALRHAKRVSGINGLSLNLLDVFSGFDKIKICTAYELDGKKIEYYPASLKELYRCKPVYEELPAWEEDITAAKKLDDLPENAQKFLNRVSELVGVPLVTVSVGPDREQTIVLKNPWER</sequence>
<organism>
    <name type="scientific">Lactobacillus helveticus (strain DPC 4571)</name>
    <dbReference type="NCBI Taxonomy" id="405566"/>
    <lineage>
        <taxon>Bacteria</taxon>
        <taxon>Bacillati</taxon>
        <taxon>Bacillota</taxon>
        <taxon>Bacilli</taxon>
        <taxon>Lactobacillales</taxon>
        <taxon>Lactobacillaceae</taxon>
        <taxon>Lactobacillus</taxon>
    </lineage>
</organism>
<comment type="function">
    <text evidence="1">Plays an important role in the de novo pathway of purine nucleotide biosynthesis. Catalyzes the first committed step in the biosynthesis of AMP from IMP.</text>
</comment>
<comment type="catalytic activity">
    <reaction evidence="1">
        <text>IMP + L-aspartate + GTP = N(6)-(1,2-dicarboxyethyl)-AMP + GDP + phosphate + 2 H(+)</text>
        <dbReference type="Rhea" id="RHEA:15753"/>
        <dbReference type="ChEBI" id="CHEBI:15378"/>
        <dbReference type="ChEBI" id="CHEBI:29991"/>
        <dbReference type="ChEBI" id="CHEBI:37565"/>
        <dbReference type="ChEBI" id="CHEBI:43474"/>
        <dbReference type="ChEBI" id="CHEBI:57567"/>
        <dbReference type="ChEBI" id="CHEBI:58053"/>
        <dbReference type="ChEBI" id="CHEBI:58189"/>
        <dbReference type="EC" id="6.3.4.4"/>
    </reaction>
</comment>
<comment type="cofactor">
    <cofactor evidence="1">
        <name>Mg(2+)</name>
        <dbReference type="ChEBI" id="CHEBI:18420"/>
    </cofactor>
    <text evidence="1">Binds 1 Mg(2+) ion per subunit.</text>
</comment>
<comment type="pathway">
    <text evidence="1">Purine metabolism; AMP biosynthesis via de novo pathway; AMP from IMP: step 1/2.</text>
</comment>
<comment type="subunit">
    <text evidence="1">Homodimer.</text>
</comment>
<comment type="subcellular location">
    <subcellularLocation>
        <location evidence="1">Cytoplasm</location>
    </subcellularLocation>
</comment>
<comment type="similarity">
    <text evidence="1">Belongs to the adenylosuccinate synthetase family.</text>
</comment>
<protein>
    <recommendedName>
        <fullName evidence="1">Adenylosuccinate synthetase</fullName>
        <shortName evidence="1">AMPSase</shortName>
        <shortName evidence="1">AdSS</shortName>
        <ecNumber evidence="1">6.3.4.4</ecNumber>
    </recommendedName>
    <alternativeName>
        <fullName evidence="1">IMP--aspartate ligase</fullName>
    </alternativeName>
</protein>
<name>PURA_LACH4</name>